<keyword id="KW-0030">Aminoacyl-tRNA synthetase</keyword>
<keyword id="KW-0067">ATP-binding</keyword>
<keyword id="KW-0963">Cytoplasm</keyword>
<keyword id="KW-0436">Ligase</keyword>
<keyword id="KW-0479">Metal-binding</keyword>
<keyword id="KW-0547">Nucleotide-binding</keyword>
<keyword id="KW-0648">Protein biosynthesis</keyword>
<keyword id="KW-0694">RNA-binding</keyword>
<keyword id="KW-0820">tRNA-binding</keyword>
<keyword id="KW-0862">Zinc</keyword>
<name>SYA_STRP6</name>
<sequence length="872" mass="96545">MKELSSAQIRQMWLDFWKSKGHCVEPSANLVPVNDPTLLWINSGVATLKKYFDGSVIPENPRITNAQKSIRTNDIENVGKTARHHTMFEMLGNFSIGDYFRDEAIEWGFELLTSPEWFDFPKDKLYMTYYPDDKDSYNRWIACGVEPSHLVPIEDNFWEIGAGPSGPDTEIFFDRGEDFDPENIGLRLLAEDIENDRYIEIWNIVLSQFNADPAVPRSEYKELPNKNIDTGAGLERLAAVMQGAKTNFETDLFMPIIREVEKLSGKTYDPDGDNMSFKVIADHIRALSFAIGDGALPGNEGRGYVLRRLLRRAVMHGRRLGINETFLYKLVPTVGQIMESYYPEVLEKRDFIEKIVKREEETFARTIDAGSGHLDSLLAQLKAEGKDTLEGKDIFKLYDTYGFPVELIEELAEDAGYKIDHEGFKSAMKEQQDRARAAVVKGGSMGMQNETLAGIVEESRFEYDTYSLESSLSVIIADNERTEAVSEGQALLVFAQTPFYAEMGGQVADTGRIKNDKGDTVAEVVDVQKAPNGQPLHTVNVLASLSVGTNYTLEINKERRLAVEKNHTATHLLHAALHNVIGEHATQAGSLNEEEFLRFDFTHFEAVSNEELRHIEQEVNEQIWNALTITTTETDVETAKEMGAMALFGEKYGKVVRVVQIGNYSVELCGGTHLNNSSEIGLFKIVKEEGIGSGTRRIIAVTGRQAFEAYRNQEDALKEIAATVKAPQLKDAAAKVQALSDSLRDLQKENAELKEKAAAAAAGDVFKDVQEAKGVRFIASQVDVADAGALRTFADNWKQKDYSDVLVLVAAIGEKVNVLVASKTKDVHAGNMIKELAPIVAGRGGGKPDMAMAGGSDASKIAELLAAVAETV</sequence>
<evidence type="ECO:0000255" key="1">
    <source>
        <dbReference type="HAMAP-Rule" id="MF_00036"/>
    </source>
</evidence>
<gene>
    <name evidence="1" type="primary">alaS</name>
    <name type="ordered locus">M6_Spy1107</name>
</gene>
<feature type="chain" id="PRO_0000075220" description="Alanine--tRNA ligase">
    <location>
        <begin position="1"/>
        <end position="872"/>
    </location>
</feature>
<feature type="binding site" evidence="1">
    <location>
        <position position="567"/>
    </location>
    <ligand>
        <name>Zn(2+)</name>
        <dbReference type="ChEBI" id="CHEBI:29105"/>
    </ligand>
</feature>
<feature type="binding site" evidence="1">
    <location>
        <position position="571"/>
    </location>
    <ligand>
        <name>Zn(2+)</name>
        <dbReference type="ChEBI" id="CHEBI:29105"/>
    </ligand>
</feature>
<feature type="binding site" evidence="1">
    <location>
        <position position="669"/>
    </location>
    <ligand>
        <name>Zn(2+)</name>
        <dbReference type="ChEBI" id="CHEBI:29105"/>
    </ligand>
</feature>
<feature type="binding site" evidence="1">
    <location>
        <position position="673"/>
    </location>
    <ligand>
        <name>Zn(2+)</name>
        <dbReference type="ChEBI" id="CHEBI:29105"/>
    </ligand>
</feature>
<proteinExistence type="inferred from homology"/>
<dbReference type="EC" id="6.1.1.7" evidence="1"/>
<dbReference type="EMBL" id="CP000003">
    <property type="protein sequence ID" value="AAT87242.1"/>
    <property type="molecule type" value="Genomic_DNA"/>
</dbReference>
<dbReference type="RefSeq" id="WP_011184660.1">
    <property type="nucleotide sequence ID" value="NC_006086.1"/>
</dbReference>
<dbReference type="SMR" id="Q5XBH1"/>
<dbReference type="KEGG" id="spa:M6_Spy1107"/>
<dbReference type="HOGENOM" id="CLU_004485_1_1_9"/>
<dbReference type="Proteomes" id="UP000001167">
    <property type="component" value="Chromosome"/>
</dbReference>
<dbReference type="GO" id="GO:0005829">
    <property type="term" value="C:cytosol"/>
    <property type="evidence" value="ECO:0007669"/>
    <property type="project" value="TreeGrafter"/>
</dbReference>
<dbReference type="GO" id="GO:0004813">
    <property type="term" value="F:alanine-tRNA ligase activity"/>
    <property type="evidence" value="ECO:0007669"/>
    <property type="project" value="UniProtKB-UniRule"/>
</dbReference>
<dbReference type="GO" id="GO:0002161">
    <property type="term" value="F:aminoacyl-tRNA deacylase activity"/>
    <property type="evidence" value="ECO:0007669"/>
    <property type="project" value="TreeGrafter"/>
</dbReference>
<dbReference type="GO" id="GO:0005524">
    <property type="term" value="F:ATP binding"/>
    <property type="evidence" value="ECO:0007669"/>
    <property type="project" value="UniProtKB-UniRule"/>
</dbReference>
<dbReference type="GO" id="GO:0140096">
    <property type="term" value="F:catalytic activity, acting on a protein"/>
    <property type="evidence" value="ECO:0007669"/>
    <property type="project" value="UniProtKB-ARBA"/>
</dbReference>
<dbReference type="GO" id="GO:0016740">
    <property type="term" value="F:transferase activity"/>
    <property type="evidence" value="ECO:0007669"/>
    <property type="project" value="UniProtKB-ARBA"/>
</dbReference>
<dbReference type="GO" id="GO:0000049">
    <property type="term" value="F:tRNA binding"/>
    <property type="evidence" value="ECO:0007669"/>
    <property type="project" value="UniProtKB-KW"/>
</dbReference>
<dbReference type="GO" id="GO:0008270">
    <property type="term" value="F:zinc ion binding"/>
    <property type="evidence" value="ECO:0007669"/>
    <property type="project" value="UniProtKB-UniRule"/>
</dbReference>
<dbReference type="GO" id="GO:0006419">
    <property type="term" value="P:alanyl-tRNA aminoacylation"/>
    <property type="evidence" value="ECO:0007669"/>
    <property type="project" value="UniProtKB-UniRule"/>
</dbReference>
<dbReference type="CDD" id="cd00673">
    <property type="entry name" value="AlaRS_core"/>
    <property type="match status" value="1"/>
</dbReference>
<dbReference type="FunFam" id="3.10.310.40:FF:000001">
    <property type="entry name" value="Alanine--tRNA ligase"/>
    <property type="match status" value="1"/>
</dbReference>
<dbReference type="FunFam" id="3.30.54.20:FF:000001">
    <property type="entry name" value="Alanine--tRNA ligase"/>
    <property type="match status" value="1"/>
</dbReference>
<dbReference type="FunFam" id="3.30.930.10:FF:000046">
    <property type="entry name" value="Alanine--tRNA ligase"/>
    <property type="match status" value="1"/>
</dbReference>
<dbReference type="FunFam" id="3.30.980.10:FF:000004">
    <property type="entry name" value="Alanine--tRNA ligase, cytoplasmic"/>
    <property type="match status" value="1"/>
</dbReference>
<dbReference type="Gene3D" id="2.40.30.130">
    <property type="match status" value="1"/>
</dbReference>
<dbReference type="Gene3D" id="3.10.310.40">
    <property type="match status" value="1"/>
</dbReference>
<dbReference type="Gene3D" id="3.30.54.20">
    <property type="match status" value="1"/>
</dbReference>
<dbReference type="Gene3D" id="6.10.250.550">
    <property type="match status" value="1"/>
</dbReference>
<dbReference type="Gene3D" id="3.30.930.10">
    <property type="entry name" value="Bira Bifunctional Protein, Domain 2"/>
    <property type="match status" value="1"/>
</dbReference>
<dbReference type="Gene3D" id="3.30.980.10">
    <property type="entry name" value="Threonyl-trna Synthetase, Chain A, domain 2"/>
    <property type="match status" value="1"/>
</dbReference>
<dbReference type="HAMAP" id="MF_00036_B">
    <property type="entry name" value="Ala_tRNA_synth_B"/>
    <property type="match status" value="1"/>
</dbReference>
<dbReference type="InterPro" id="IPR045864">
    <property type="entry name" value="aa-tRNA-synth_II/BPL/LPL"/>
</dbReference>
<dbReference type="InterPro" id="IPR002318">
    <property type="entry name" value="Ala-tRNA-lgiase_IIc"/>
</dbReference>
<dbReference type="InterPro" id="IPR018162">
    <property type="entry name" value="Ala-tRNA-ligase_IIc_anticod-bd"/>
</dbReference>
<dbReference type="InterPro" id="IPR018165">
    <property type="entry name" value="Ala-tRNA-synth_IIc_core"/>
</dbReference>
<dbReference type="InterPro" id="IPR018164">
    <property type="entry name" value="Ala-tRNA-synth_IIc_N"/>
</dbReference>
<dbReference type="InterPro" id="IPR050058">
    <property type="entry name" value="Ala-tRNA_ligase"/>
</dbReference>
<dbReference type="InterPro" id="IPR023033">
    <property type="entry name" value="Ala_tRNA_ligase_euk/bac"/>
</dbReference>
<dbReference type="InterPro" id="IPR003156">
    <property type="entry name" value="DHHA1_dom"/>
</dbReference>
<dbReference type="InterPro" id="IPR018163">
    <property type="entry name" value="Thr/Ala-tRNA-synth_IIc_edit"/>
</dbReference>
<dbReference type="InterPro" id="IPR009000">
    <property type="entry name" value="Transl_B-barrel_sf"/>
</dbReference>
<dbReference type="InterPro" id="IPR012947">
    <property type="entry name" value="tRNA_SAD"/>
</dbReference>
<dbReference type="NCBIfam" id="TIGR00344">
    <property type="entry name" value="alaS"/>
    <property type="match status" value="1"/>
</dbReference>
<dbReference type="PANTHER" id="PTHR11777:SF9">
    <property type="entry name" value="ALANINE--TRNA LIGASE, CYTOPLASMIC"/>
    <property type="match status" value="1"/>
</dbReference>
<dbReference type="PANTHER" id="PTHR11777">
    <property type="entry name" value="ALANYL-TRNA SYNTHETASE"/>
    <property type="match status" value="1"/>
</dbReference>
<dbReference type="Pfam" id="PF02272">
    <property type="entry name" value="DHHA1"/>
    <property type="match status" value="1"/>
</dbReference>
<dbReference type="Pfam" id="PF01411">
    <property type="entry name" value="tRNA-synt_2c"/>
    <property type="match status" value="1"/>
</dbReference>
<dbReference type="Pfam" id="PF07973">
    <property type="entry name" value="tRNA_SAD"/>
    <property type="match status" value="1"/>
</dbReference>
<dbReference type="PRINTS" id="PR00980">
    <property type="entry name" value="TRNASYNTHALA"/>
</dbReference>
<dbReference type="SMART" id="SM00863">
    <property type="entry name" value="tRNA_SAD"/>
    <property type="match status" value="1"/>
</dbReference>
<dbReference type="SUPFAM" id="SSF55681">
    <property type="entry name" value="Class II aaRS and biotin synthetases"/>
    <property type="match status" value="1"/>
</dbReference>
<dbReference type="SUPFAM" id="SSF101353">
    <property type="entry name" value="Putative anticodon-binding domain of alanyl-tRNA synthetase (AlaRS)"/>
    <property type="match status" value="1"/>
</dbReference>
<dbReference type="SUPFAM" id="SSF55186">
    <property type="entry name" value="ThrRS/AlaRS common domain"/>
    <property type="match status" value="1"/>
</dbReference>
<dbReference type="SUPFAM" id="SSF50447">
    <property type="entry name" value="Translation proteins"/>
    <property type="match status" value="1"/>
</dbReference>
<dbReference type="PROSITE" id="PS50860">
    <property type="entry name" value="AA_TRNA_LIGASE_II_ALA"/>
    <property type="match status" value="1"/>
</dbReference>
<organism>
    <name type="scientific">Streptococcus pyogenes serotype M6 (strain ATCC BAA-946 / MGAS10394)</name>
    <dbReference type="NCBI Taxonomy" id="286636"/>
    <lineage>
        <taxon>Bacteria</taxon>
        <taxon>Bacillati</taxon>
        <taxon>Bacillota</taxon>
        <taxon>Bacilli</taxon>
        <taxon>Lactobacillales</taxon>
        <taxon>Streptococcaceae</taxon>
        <taxon>Streptococcus</taxon>
    </lineage>
</organism>
<reference key="1">
    <citation type="journal article" date="2004" name="J. Infect. Dis.">
        <title>Progress toward characterization of the group A Streptococcus metagenome: complete genome sequence of a macrolide-resistant serotype M6 strain.</title>
        <authorList>
            <person name="Banks D.J."/>
            <person name="Porcella S.F."/>
            <person name="Barbian K.D."/>
            <person name="Beres S.B."/>
            <person name="Philips L.E."/>
            <person name="Voyich J.M."/>
            <person name="DeLeo F.R."/>
            <person name="Martin J.M."/>
            <person name="Somerville G.A."/>
            <person name="Musser J.M."/>
        </authorList>
    </citation>
    <scope>NUCLEOTIDE SEQUENCE [LARGE SCALE GENOMIC DNA]</scope>
    <source>
        <strain>ATCC BAA-946 / MGAS10394</strain>
    </source>
</reference>
<accession>Q5XBH1</accession>
<protein>
    <recommendedName>
        <fullName evidence="1">Alanine--tRNA ligase</fullName>
        <ecNumber evidence="1">6.1.1.7</ecNumber>
    </recommendedName>
    <alternativeName>
        <fullName evidence="1">Alanyl-tRNA synthetase</fullName>
        <shortName evidence="1">AlaRS</shortName>
    </alternativeName>
</protein>
<comment type="function">
    <text evidence="1">Catalyzes the attachment of alanine to tRNA(Ala) in a two-step reaction: alanine is first activated by ATP to form Ala-AMP and then transferred to the acceptor end of tRNA(Ala). Also edits incorrectly charged Ser-tRNA(Ala) and Gly-tRNA(Ala) via its editing domain.</text>
</comment>
<comment type="catalytic activity">
    <reaction evidence="1">
        <text>tRNA(Ala) + L-alanine + ATP = L-alanyl-tRNA(Ala) + AMP + diphosphate</text>
        <dbReference type="Rhea" id="RHEA:12540"/>
        <dbReference type="Rhea" id="RHEA-COMP:9657"/>
        <dbReference type="Rhea" id="RHEA-COMP:9923"/>
        <dbReference type="ChEBI" id="CHEBI:30616"/>
        <dbReference type="ChEBI" id="CHEBI:33019"/>
        <dbReference type="ChEBI" id="CHEBI:57972"/>
        <dbReference type="ChEBI" id="CHEBI:78442"/>
        <dbReference type="ChEBI" id="CHEBI:78497"/>
        <dbReference type="ChEBI" id="CHEBI:456215"/>
        <dbReference type="EC" id="6.1.1.7"/>
    </reaction>
</comment>
<comment type="cofactor">
    <cofactor evidence="1">
        <name>Zn(2+)</name>
        <dbReference type="ChEBI" id="CHEBI:29105"/>
    </cofactor>
    <text evidence="1">Binds 1 zinc ion per subunit.</text>
</comment>
<comment type="subcellular location">
    <subcellularLocation>
        <location evidence="1">Cytoplasm</location>
    </subcellularLocation>
</comment>
<comment type="domain">
    <text evidence="1">Consists of three domains; the N-terminal catalytic domain, the editing domain and the C-terminal C-Ala domain. The editing domain removes incorrectly charged amino acids, while the C-Ala domain, along with tRNA(Ala), serves as a bridge to cooperatively bring together the editing and aminoacylation centers thus stimulating deacylation of misacylated tRNAs.</text>
</comment>
<comment type="similarity">
    <text evidence="1">Belongs to the class-II aminoacyl-tRNA synthetase family.</text>
</comment>